<dbReference type="EMBL" id="AE016958">
    <property type="protein sequence ID" value="AAS06676.1"/>
    <property type="molecule type" value="Genomic_DNA"/>
</dbReference>
<dbReference type="RefSeq" id="WP_003873555.1">
    <property type="nucleotide sequence ID" value="NZ_CP106873.1"/>
</dbReference>
<dbReference type="SMR" id="Q73SE8"/>
<dbReference type="STRING" id="262316.MAP_4126"/>
<dbReference type="GeneID" id="75272024"/>
<dbReference type="KEGG" id="mpa:MAP_4126"/>
<dbReference type="eggNOG" id="COG0222">
    <property type="taxonomic scope" value="Bacteria"/>
</dbReference>
<dbReference type="HOGENOM" id="CLU_086499_3_0_11"/>
<dbReference type="Proteomes" id="UP000000580">
    <property type="component" value="Chromosome"/>
</dbReference>
<dbReference type="GO" id="GO:0022625">
    <property type="term" value="C:cytosolic large ribosomal subunit"/>
    <property type="evidence" value="ECO:0007669"/>
    <property type="project" value="TreeGrafter"/>
</dbReference>
<dbReference type="GO" id="GO:0003729">
    <property type="term" value="F:mRNA binding"/>
    <property type="evidence" value="ECO:0007669"/>
    <property type="project" value="TreeGrafter"/>
</dbReference>
<dbReference type="GO" id="GO:0003735">
    <property type="term" value="F:structural constituent of ribosome"/>
    <property type="evidence" value="ECO:0007669"/>
    <property type="project" value="InterPro"/>
</dbReference>
<dbReference type="GO" id="GO:0006412">
    <property type="term" value="P:translation"/>
    <property type="evidence" value="ECO:0007669"/>
    <property type="project" value="UniProtKB-UniRule"/>
</dbReference>
<dbReference type="CDD" id="cd00387">
    <property type="entry name" value="Ribosomal_L7_L12"/>
    <property type="match status" value="1"/>
</dbReference>
<dbReference type="FunFam" id="1.20.5.710:FF:000005">
    <property type="entry name" value="50S ribosomal protein L7/L12"/>
    <property type="match status" value="1"/>
</dbReference>
<dbReference type="FunFam" id="3.30.1390.10:FF:000001">
    <property type="entry name" value="50S ribosomal protein L7/L12"/>
    <property type="match status" value="1"/>
</dbReference>
<dbReference type="Gene3D" id="3.30.1390.10">
    <property type="match status" value="1"/>
</dbReference>
<dbReference type="Gene3D" id="1.20.5.710">
    <property type="entry name" value="Single helix bin"/>
    <property type="match status" value="1"/>
</dbReference>
<dbReference type="HAMAP" id="MF_00368">
    <property type="entry name" value="Ribosomal_bL12"/>
    <property type="match status" value="1"/>
</dbReference>
<dbReference type="InterPro" id="IPR000206">
    <property type="entry name" value="Ribosomal_bL12"/>
</dbReference>
<dbReference type="InterPro" id="IPR013823">
    <property type="entry name" value="Ribosomal_bL12_C"/>
</dbReference>
<dbReference type="InterPro" id="IPR014719">
    <property type="entry name" value="Ribosomal_bL12_C/ClpS-like"/>
</dbReference>
<dbReference type="InterPro" id="IPR008932">
    <property type="entry name" value="Ribosomal_bL12_oligo"/>
</dbReference>
<dbReference type="InterPro" id="IPR036235">
    <property type="entry name" value="Ribosomal_bL12_oligo_N_sf"/>
</dbReference>
<dbReference type="NCBIfam" id="TIGR00855">
    <property type="entry name" value="L12"/>
    <property type="match status" value="1"/>
</dbReference>
<dbReference type="PANTHER" id="PTHR45987">
    <property type="entry name" value="39S RIBOSOMAL PROTEIN L12"/>
    <property type="match status" value="1"/>
</dbReference>
<dbReference type="PANTHER" id="PTHR45987:SF4">
    <property type="entry name" value="LARGE RIBOSOMAL SUBUNIT PROTEIN BL12M"/>
    <property type="match status" value="1"/>
</dbReference>
<dbReference type="Pfam" id="PF00542">
    <property type="entry name" value="Ribosomal_L12"/>
    <property type="match status" value="1"/>
</dbReference>
<dbReference type="Pfam" id="PF16320">
    <property type="entry name" value="Ribosomal_L12_N"/>
    <property type="match status" value="1"/>
</dbReference>
<dbReference type="SUPFAM" id="SSF54736">
    <property type="entry name" value="ClpS-like"/>
    <property type="match status" value="1"/>
</dbReference>
<dbReference type="SUPFAM" id="SSF48300">
    <property type="entry name" value="Ribosomal protein L7/12, oligomerisation (N-terminal) domain"/>
    <property type="match status" value="1"/>
</dbReference>
<name>RL7_MYCPA</name>
<protein>
    <recommendedName>
        <fullName evidence="1">Large ribosomal subunit protein bL12</fullName>
    </recommendedName>
    <alternativeName>
        <fullName evidence="2">50S ribosomal protein L7/L12</fullName>
    </alternativeName>
</protein>
<comment type="function">
    <text evidence="1">Forms part of the ribosomal stalk which helps the ribosome interact with GTP-bound translation factors. Is thus essential for accurate translation.</text>
</comment>
<comment type="subunit">
    <text evidence="1">Homodimer. Part of the ribosomal stalk of the 50S ribosomal subunit. Forms a multimeric L10(L12)X complex, where L10 forms an elongated spine to which 2 to 4 L12 dimers bind in a sequential fashion. Binds GTP-bound translation factors.</text>
</comment>
<comment type="similarity">
    <text evidence="1">Belongs to the bacterial ribosomal protein bL12 family.</text>
</comment>
<proteinExistence type="inferred from homology"/>
<gene>
    <name evidence="1" type="primary">rplL</name>
    <name type="ordered locus">MAP_4126</name>
</gene>
<accession>Q73SE8</accession>
<keyword id="KW-1185">Reference proteome</keyword>
<keyword id="KW-0687">Ribonucleoprotein</keyword>
<keyword id="KW-0689">Ribosomal protein</keyword>
<evidence type="ECO:0000255" key="1">
    <source>
        <dbReference type="HAMAP-Rule" id="MF_00368"/>
    </source>
</evidence>
<evidence type="ECO:0000305" key="2"/>
<reference key="1">
    <citation type="journal article" date="2005" name="Proc. Natl. Acad. Sci. U.S.A.">
        <title>The complete genome sequence of Mycobacterium avium subspecies paratuberculosis.</title>
        <authorList>
            <person name="Li L."/>
            <person name="Bannantine J.P."/>
            <person name="Zhang Q."/>
            <person name="Amonsin A."/>
            <person name="May B.J."/>
            <person name="Alt D."/>
            <person name="Banerji N."/>
            <person name="Kanjilal S."/>
            <person name="Kapur V."/>
        </authorList>
    </citation>
    <scope>NUCLEOTIDE SEQUENCE [LARGE SCALE GENOMIC DNA]</scope>
    <source>
        <strain>ATCC BAA-968 / K-10</strain>
    </source>
</reference>
<sequence>MAKMSTDDLLDAFKEMTLLELSDFVKKFEETFEVTAAAPVAVAAAGPAAGGAPAEAAEEQSEFDVILESAGDKKIGVIKVVREIVSGLGLKEAKDLVDGAPKPLLEKVAKEAADDAKAKLEAAGATVTVK</sequence>
<organism>
    <name type="scientific">Mycolicibacterium paratuberculosis (strain ATCC BAA-968 / K-10)</name>
    <name type="common">Mycobacterium paratuberculosis</name>
    <dbReference type="NCBI Taxonomy" id="262316"/>
    <lineage>
        <taxon>Bacteria</taxon>
        <taxon>Bacillati</taxon>
        <taxon>Actinomycetota</taxon>
        <taxon>Actinomycetes</taxon>
        <taxon>Mycobacteriales</taxon>
        <taxon>Mycobacteriaceae</taxon>
        <taxon>Mycobacterium</taxon>
        <taxon>Mycobacterium avium complex (MAC)</taxon>
    </lineage>
</organism>
<feature type="chain" id="PRO_0000243447" description="Large ribosomal subunit protein bL12">
    <location>
        <begin position="1"/>
        <end position="130"/>
    </location>
</feature>